<feature type="chain" id="PRO_0000137481" description="Inorganic pyrophosphatase">
    <location>
        <begin position="1"/>
        <end position="178"/>
    </location>
</feature>
<feature type="binding site" evidence="1">
    <location>
        <position position="30"/>
    </location>
    <ligand>
        <name>substrate</name>
    </ligand>
</feature>
<feature type="binding site" evidence="1">
    <location>
        <position position="44"/>
    </location>
    <ligand>
        <name>substrate</name>
    </ligand>
</feature>
<feature type="binding site" evidence="1">
    <location>
        <position position="56"/>
    </location>
    <ligand>
        <name>substrate</name>
    </ligand>
</feature>
<feature type="binding site" evidence="1">
    <location>
        <position position="66"/>
    </location>
    <ligand>
        <name>Mg(2+)</name>
        <dbReference type="ChEBI" id="CHEBI:18420"/>
        <label>1</label>
    </ligand>
</feature>
<feature type="binding site" evidence="1">
    <location>
        <position position="71"/>
    </location>
    <ligand>
        <name>Mg(2+)</name>
        <dbReference type="ChEBI" id="CHEBI:18420"/>
        <label>1</label>
    </ligand>
</feature>
<feature type="binding site" evidence="1">
    <location>
        <position position="71"/>
    </location>
    <ligand>
        <name>Mg(2+)</name>
        <dbReference type="ChEBI" id="CHEBI:18420"/>
        <label>2</label>
    </ligand>
</feature>
<feature type="binding site" evidence="1">
    <location>
        <position position="103"/>
    </location>
    <ligand>
        <name>Mg(2+)</name>
        <dbReference type="ChEBI" id="CHEBI:18420"/>
        <label>1</label>
    </ligand>
</feature>
<feature type="binding site" evidence="1">
    <location>
        <position position="142"/>
    </location>
    <ligand>
        <name>substrate</name>
    </ligand>
</feature>
<gene>
    <name evidence="1" type="primary">ppa</name>
    <name type="ordered locus">blr0548</name>
</gene>
<accession>Q89WY0</accession>
<sequence>MRIDAISIGKNVPQDVNVIIEVPVGGEPIKYEMDKEAGTLVVDRFLYTPMRYPGNYGFIPHTLSDDGDPCDVLIINTRAIIPGAVMSVRPVGVLFMEDEAGGDEKILAVPSSKLTQRYDKVKSYSDLPDITLQQIQHFFEHYKDLEKGKWVKILRWGGPEDAHKLILEGIEREKKKKG</sequence>
<comment type="function">
    <text evidence="1">Catalyzes the hydrolysis of inorganic pyrophosphate (PPi) forming two phosphate ions.</text>
</comment>
<comment type="catalytic activity">
    <reaction evidence="1">
        <text>diphosphate + H2O = 2 phosphate + H(+)</text>
        <dbReference type="Rhea" id="RHEA:24576"/>
        <dbReference type="ChEBI" id="CHEBI:15377"/>
        <dbReference type="ChEBI" id="CHEBI:15378"/>
        <dbReference type="ChEBI" id="CHEBI:33019"/>
        <dbReference type="ChEBI" id="CHEBI:43474"/>
        <dbReference type="EC" id="3.6.1.1"/>
    </reaction>
</comment>
<comment type="cofactor">
    <cofactor evidence="1">
        <name>Mg(2+)</name>
        <dbReference type="ChEBI" id="CHEBI:18420"/>
    </cofactor>
</comment>
<comment type="subunit">
    <text evidence="1">Homohexamer.</text>
</comment>
<comment type="subcellular location">
    <subcellularLocation>
        <location evidence="1">Cytoplasm</location>
    </subcellularLocation>
</comment>
<comment type="similarity">
    <text evidence="1">Belongs to the PPase family.</text>
</comment>
<organism>
    <name type="scientific">Bradyrhizobium diazoefficiens (strain JCM 10833 / BCRC 13528 / IAM 13628 / NBRC 14792 / USDA 110)</name>
    <dbReference type="NCBI Taxonomy" id="224911"/>
    <lineage>
        <taxon>Bacteria</taxon>
        <taxon>Pseudomonadati</taxon>
        <taxon>Pseudomonadota</taxon>
        <taxon>Alphaproteobacteria</taxon>
        <taxon>Hyphomicrobiales</taxon>
        <taxon>Nitrobacteraceae</taxon>
        <taxon>Bradyrhizobium</taxon>
    </lineage>
</organism>
<keyword id="KW-0963">Cytoplasm</keyword>
<keyword id="KW-0378">Hydrolase</keyword>
<keyword id="KW-0460">Magnesium</keyword>
<keyword id="KW-0479">Metal-binding</keyword>
<keyword id="KW-1185">Reference proteome</keyword>
<dbReference type="EC" id="3.6.1.1" evidence="1"/>
<dbReference type="EMBL" id="BA000040">
    <property type="protein sequence ID" value="BAC45813.1"/>
    <property type="molecule type" value="Genomic_DNA"/>
</dbReference>
<dbReference type="RefSeq" id="NP_767188.1">
    <property type="nucleotide sequence ID" value="NC_004463.1"/>
</dbReference>
<dbReference type="RefSeq" id="WP_011083378.1">
    <property type="nucleotide sequence ID" value="NC_004463.1"/>
</dbReference>
<dbReference type="SMR" id="Q89WY0"/>
<dbReference type="FunCoup" id="Q89WY0">
    <property type="interactions" value="430"/>
</dbReference>
<dbReference type="STRING" id="224911.AAV28_42010"/>
<dbReference type="EnsemblBacteria" id="BAC45813">
    <property type="protein sequence ID" value="BAC45813"/>
    <property type="gene ID" value="BAC45813"/>
</dbReference>
<dbReference type="GeneID" id="46495692"/>
<dbReference type="KEGG" id="bja:blr0548"/>
<dbReference type="PATRIC" id="fig|224911.44.peg.9090"/>
<dbReference type="eggNOG" id="COG0221">
    <property type="taxonomic scope" value="Bacteria"/>
</dbReference>
<dbReference type="HOGENOM" id="CLU_073198_1_0_5"/>
<dbReference type="InParanoid" id="Q89WY0"/>
<dbReference type="OrthoDB" id="5187599at2"/>
<dbReference type="PhylomeDB" id="Q89WY0"/>
<dbReference type="Proteomes" id="UP000002526">
    <property type="component" value="Chromosome"/>
</dbReference>
<dbReference type="GO" id="GO:0005829">
    <property type="term" value="C:cytosol"/>
    <property type="evidence" value="ECO:0000318"/>
    <property type="project" value="GO_Central"/>
</dbReference>
<dbReference type="GO" id="GO:0004427">
    <property type="term" value="F:inorganic diphosphate phosphatase activity"/>
    <property type="evidence" value="ECO:0000318"/>
    <property type="project" value="GO_Central"/>
</dbReference>
<dbReference type="GO" id="GO:0000287">
    <property type="term" value="F:magnesium ion binding"/>
    <property type="evidence" value="ECO:0000318"/>
    <property type="project" value="GO_Central"/>
</dbReference>
<dbReference type="GO" id="GO:0006796">
    <property type="term" value="P:phosphate-containing compound metabolic process"/>
    <property type="evidence" value="ECO:0000318"/>
    <property type="project" value="GO_Central"/>
</dbReference>
<dbReference type="CDD" id="cd00412">
    <property type="entry name" value="pyrophosphatase"/>
    <property type="match status" value="1"/>
</dbReference>
<dbReference type="FunFam" id="3.90.80.10:FF:000001">
    <property type="entry name" value="Inorganic pyrophosphatase"/>
    <property type="match status" value="1"/>
</dbReference>
<dbReference type="Gene3D" id="3.90.80.10">
    <property type="entry name" value="Inorganic pyrophosphatase"/>
    <property type="match status" value="1"/>
</dbReference>
<dbReference type="HAMAP" id="MF_00209">
    <property type="entry name" value="Inorganic_PPase"/>
    <property type="match status" value="1"/>
</dbReference>
<dbReference type="InterPro" id="IPR008162">
    <property type="entry name" value="Pyrophosphatase"/>
</dbReference>
<dbReference type="InterPro" id="IPR036649">
    <property type="entry name" value="Pyrophosphatase_sf"/>
</dbReference>
<dbReference type="NCBIfam" id="NF002317">
    <property type="entry name" value="PRK01250.1"/>
    <property type="match status" value="1"/>
</dbReference>
<dbReference type="PANTHER" id="PTHR10286">
    <property type="entry name" value="INORGANIC PYROPHOSPHATASE"/>
    <property type="match status" value="1"/>
</dbReference>
<dbReference type="Pfam" id="PF00719">
    <property type="entry name" value="Pyrophosphatase"/>
    <property type="match status" value="1"/>
</dbReference>
<dbReference type="SUPFAM" id="SSF50324">
    <property type="entry name" value="Inorganic pyrophosphatase"/>
    <property type="match status" value="1"/>
</dbReference>
<name>IPYR_BRADU</name>
<reference key="1">
    <citation type="journal article" date="2002" name="DNA Res.">
        <title>Complete genomic sequence of nitrogen-fixing symbiotic bacterium Bradyrhizobium japonicum USDA110.</title>
        <authorList>
            <person name="Kaneko T."/>
            <person name="Nakamura Y."/>
            <person name="Sato S."/>
            <person name="Minamisawa K."/>
            <person name="Uchiumi T."/>
            <person name="Sasamoto S."/>
            <person name="Watanabe A."/>
            <person name="Idesawa K."/>
            <person name="Iriguchi M."/>
            <person name="Kawashima K."/>
            <person name="Kohara M."/>
            <person name="Matsumoto M."/>
            <person name="Shimpo S."/>
            <person name="Tsuruoka H."/>
            <person name="Wada T."/>
            <person name="Yamada M."/>
            <person name="Tabata S."/>
        </authorList>
    </citation>
    <scope>NUCLEOTIDE SEQUENCE [LARGE SCALE GENOMIC DNA]</scope>
    <source>
        <strain>JCM 10833 / BCRC 13528 / IAM 13628 / NBRC 14792 / USDA 110</strain>
    </source>
</reference>
<protein>
    <recommendedName>
        <fullName evidence="1">Inorganic pyrophosphatase</fullName>
        <ecNumber evidence="1">3.6.1.1</ecNumber>
    </recommendedName>
    <alternativeName>
        <fullName evidence="1">Pyrophosphate phospho-hydrolase</fullName>
        <shortName evidence="1">PPase</shortName>
    </alternativeName>
</protein>
<proteinExistence type="inferred from homology"/>
<evidence type="ECO:0000255" key="1">
    <source>
        <dbReference type="HAMAP-Rule" id="MF_00209"/>
    </source>
</evidence>